<protein>
    <recommendedName>
        <fullName>Short-wave-sensitive opsin 1</fullName>
        <shortName>S opsin</shortName>
    </recommendedName>
    <alternativeName>
        <fullName>Blue cone photoreceptor pigment</fullName>
    </alternativeName>
    <alternativeName>
        <fullName>Blue-sensitive opsin</fullName>
        <shortName>BOP</shortName>
    </alternativeName>
    <alternativeName>
        <fullName>Short wavelength-sensitive cone opsin</fullName>
    </alternativeName>
</protein>
<organism>
    <name type="scientific">Rattus norvegicus</name>
    <name type="common">Rat</name>
    <dbReference type="NCBI Taxonomy" id="10116"/>
    <lineage>
        <taxon>Eukaryota</taxon>
        <taxon>Metazoa</taxon>
        <taxon>Chordata</taxon>
        <taxon>Craniata</taxon>
        <taxon>Vertebrata</taxon>
        <taxon>Euteleostomi</taxon>
        <taxon>Mammalia</taxon>
        <taxon>Eutheria</taxon>
        <taxon>Euarchontoglires</taxon>
        <taxon>Glires</taxon>
        <taxon>Rodentia</taxon>
        <taxon>Myomorpha</taxon>
        <taxon>Muroidea</taxon>
        <taxon>Muridae</taxon>
        <taxon>Murinae</taxon>
        <taxon>Rattus</taxon>
    </lineage>
</organism>
<reference key="1">
    <citation type="journal article" date="1997" name="Vis. Neurosci.">
        <title>Molecular cloning and localization of rhodopsin kinase in the mammalian pineal.</title>
        <authorList>
            <person name="Zhao X."/>
            <person name="Haeseleer F."/>
            <person name="Fariss R.N."/>
            <person name="Huang J."/>
            <person name="Baehr W."/>
            <person name="Milam A.H."/>
            <person name="Palczewski K."/>
        </authorList>
    </citation>
    <scope>NUCLEOTIDE SEQUENCE [MRNA]</scope>
    <source>
        <strain>Sprague-Dawley</strain>
        <tissue>Pineal gland</tissue>
    </source>
</reference>
<reference key="2">
    <citation type="submission" date="1998-02" db="EMBL/GenBank/DDBJ databases">
        <authorList>
            <person name="Delahaye-Brown A.-M."/>
        </authorList>
    </citation>
    <scope>NUCLEOTIDE SEQUENCE [MRNA]</scope>
    <source>
        <strain>Sprague-Dawley</strain>
        <tissue>Retina</tissue>
    </source>
</reference>
<comment type="function">
    <text evidence="1 2">Visual pigments are the light-absorbing molecules that mediate vision. They consist of an apoprotein, opsin, covalently linked to cis-retinal (By similarity). Required for the maintenance of cone outer segment organization in the ventral retina, but not essential for the maintenance of functioning cone photoreceptors (By similarity). Involved in ensuring correct abundance and localization of retinal membrane proteins (By similarity). May increase spectral sensitivity in dim light (By similarity).</text>
</comment>
<comment type="subcellular location">
    <subcellularLocation>
        <location evidence="1">Cell membrane</location>
        <topology evidence="3">Multi-pass membrane protein</topology>
    </subcellularLocation>
    <subcellularLocation>
        <location evidence="2">Photoreceptor inner segment</location>
    </subcellularLocation>
    <subcellularLocation>
        <location evidence="2">Cell projection</location>
        <location evidence="2">Cilium</location>
        <location evidence="2">Photoreceptor outer segment</location>
    </subcellularLocation>
    <subcellularLocation>
        <location evidence="1">Cytoplasm</location>
        <location evidence="1">Perinuclear region</location>
    </subcellularLocation>
</comment>
<comment type="tissue specificity">
    <text>Expressed in cone photoreceptor cells.</text>
</comment>
<comment type="PTM">
    <text>Phosphorylated on some or all of the serine and threonine residues present in the C-terminal region.</text>
</comment>
<comment type="similarity">
    <text evidence="4">Belongs to the G-protein coupled receptor 1 family. Opsin subfamily.</text>
</comment>
<name>OPSB_RAT</name>
<keyword id="KW-1003">Cell membrane</keyword>
<keyword id="KW-0966">Cell projection</keyword>
<keyword id="KW-0157">Chromophore</keyword>
<keyword id="KW-0963">Cytoplasm</keyword>
<keyword id="KW-1015">Disulfide bond</keyword>
<keyword id="KW-0297">G-protein coupled receptor</keyword>
<keyword id="KW-0325">Glycoprotein</keyword>
<keyword id="KW-0472">Membrane</keyword>
<keyword id="KW-0597">Phosphoprotein</keyword>
<keyword id="KW-0600">Photoreceptor protein</keyword>
<keyword id="KW-0675">Receptor</keyword>
<keyword id="KW-1185">Reference proteome</keyword>
<keyword id="KW-0681">Retinal protein</keyword>
<keyword id="KW-0716">Sensory transduction</keyword>
<keyword id="KW-0807">Transducer</keyword>
<keyword id="KW-0812">Transmembrane</keyword>
<keyword id="KW-1133">Transmembrane helix</keyword>
<keyword id="KW-0844">Vision</keyword>
<evidence type="ECO:0000250" key="1">
    <source>
        <dbReference type="UniProtKB" id="P03999"/>
    </source>
</evidence>
<evidence type="ECO:0000250" key="2">
    <source>
        <dbReference type="UniProtKB" id="P51491"/>
    </source>
</evidence>
<evidence type="ECO:0000255" key="3"/>
<evidence type="ECO:0000255" key="4">
    <source>
        <dbReference type="PROSITE-ProRule" id="PRU00521"/>
    </source>
</evidence>
<evidence type="ECO:0000256" key="5">
    <source>
        <dbReference type="SAM" id="MobiDB-lite"/>
    </source>
</evidence>
<evidence type="ECO:0000305" key="6"/>
<gene>
    <name type="primary">Opn1sw</name>
    <name type="synonym">Bcp</name>
</gene>
<sequence length="346" mass="39062">MSGEDEFYLFQNISSVGPWDGPQYHIAPVWAFHLQAAFMGFVFFAGTPLNATVLVATLHYKKLRQPLNYILVNVSLGGFLFCIFSVFTVFIASCHGYFLFGRHVCALEAFLGSVAGLVTGWSLAFLAFERYLVICKPFGNIRFNSKHALTVVLITWTIGIGVSIPPFFGWSRFIPEGLQCSCGPDWYTVGTKYRSEHYTWFLFIFCFIIPLSLICFSYFQLLRTLRAVAAQQQESATTQKAEREVSHMVVVMVGSFCLCYVPYAALAMYMVNNRNHGLYLRLVTIPAFFSKSSCVYNPIIYCFMNKQFRACILEMVCRKPMTDESDMSGSQKTEVSTVSSSKVGPH</sequence>
<accession>Q63652</accession>
<accession>O70363</accession>
<proteinExistence type="evidence at protein level"/>
<dbReference type="EMBL" id="U63972">
    <property type="protein sequence ID" value="AAB05931.1"/>
    <property type="molecule type" value="mRNA"/>
</dbReference>
<dbReference type="EMBL" id="AF051163">
    <property type="protein sequence ID" value="AAC05294.1"/>
    <property type="molecule type" value="mRNA"/>
</dbReference>
<dbReference type="RefSeq" id="NP_112277.1">
    <property type="nucleotide sequence ID" value="NM_031015.1"/>
</dbReference>
<dbReference type="SMR" id="Q63652"/>
<dbReference type="FunCoup" id="Q63652">
    <property type="interactions" value="18"/>
</dbReference>
<dbReference type="STRING" id="10116.ENSRNOP00000009278"/>
<dbReference type="GlyCosmos" id="Q63652">
    <property type="glycosylation" value="1 site, No reported glycans"/>
</dbReference>
<dbReference type="GlyGen" id="Q63652">
    <property type="glycosylation" value="1 site"/>
</dbReference>
<dbReference type="PhosphoSitePlus" id="Q63652"/>
<dbReference type="PaxDb" id="10116-ENSRNOP00000009278"/>
<dbReference type="GeneID" id="81644"/>
<dbReference type="KEGG" id="rno:81644"/>
<dbReference type="UCSC" id="RGD:621033">
    <property type="organism name" value="rat"/>
</dbReference>
<dbReference type="AGR" id="RGD:621033"/>
<dbReference type="CTD" id="611"/>
<dbReference type="RGD" id="621033">
    <property type="gene designation" value="Opn1sw"/>
</dbReference>
<dbReference type="eggNOG" id="KOG3656">
    <property type="taxonomic scope" value="Eukaryota"/>
</dbReference>
<dbReference type="InParanoid" id="Q63652"/>
<dbReference type="PhylomeDB" id="Q63652"/>
<dbReference type="Reactome" id="R-RNO-2187335">
    <property type="pathway name" value="The retinoid cycle in cones (daylight vision)"/>
</dbReference>
<dbReference type="Reactome" id="R-RNO-418594">
    <property type="pathway name" value="G alpha (i) signalling events"/>
</dbReference>
<dbReference type="Reactome" id="R-RNO-419771">
    <property type="pathway name" value="Opsins"/>
</dbReference>
<dbReference type="PRO" id="PR:Q63652"/>
<dbReference type="Proteomes" id="UP000002494">
    <property type="component" value="Unplaced"/>
</dbReference>
<dbReference type="GO" id="GO:0044297">
    <property type="term" value="C:cell body"/>
    <property type="evidence" value="ECO:0000314"/>
    <property type="project" value="RGD"/>
</dbReference>
<dbReference type="GO" id="GO:0120199">
    <property type="term" value="C:cone photoreceptor outer segment"/>
    <property type="evidence" value="ECO:0000266"/>
    <property type="project" value="RGD"/>
</dbReference>
<dbReference type="GO" id="GO:0048471">
    <property type="term" value="C:perinuclear region of cytoplasm"/>
    <property type="evidence" value="ECO:0000250"/>
    <property type="project" value="UniProtKB"/>
</dbReference>
<dbReference type="GO" id="GO:0001917">
    <property type="term" value="C:photoreceptor inner segment"/>
    <property type="evidence" value="ECO:0007669"/>
    <property type="project" value="UniProtKB-SubCell"/>
</dbReference>
<dbReference type="GO" id="GO:0001750">
    <property type="term" value="C:photoreceptor outer segment"/>
    <property type="evidence" value="ECO:0000314"/>
    <property type="project" value="RGD"/>
</dbReference>
<dbReference type="GO" id="GO:0005886">
    <property type="term" value="C:plasma membrane"/>
    <property type="evidence" value="ECO:0000250"/>
    <property type="project" value="UniProtKB"/>
</dbReference>
<dbReference type="GO" id="GO:0043195">
    <property type="term" value="C:terminal bouton"/>
    <property type="evidence" value="ECO:0000314"/>
    <property type="project" value="RGD"/>
</dbReference>
<dbReference type="GO" id="GO:0008020">
    <property type="term" value="F:G protein-coupled photoreceptor activity"/>
    <property type="evidence" value="ECO:0000318"/>
    <property type="project" value="GO_Central"/>
</dbReference>
<dbReference type="GO" id="GO:0071482">
    <property type="term" value="P:cellular response to light stimulus"/>
    <property type="evidence" value="ECO:0000318"/>
    <property type="project" value="GO_Central"/>
</dbReference>
<dbReference type="GO" id="GO:0071492">
    <property type="term" value="P:cellular response to UV-A"/>
    <property type="evidence" value="ECO:0000250"/>
    <property type="project" value="UniProtKB"/>
</dbReference>
<dbReference type="GO" id="GO:0007186">
    <property type="term" value="P:G protein-coupled receptor signaling pathway"/>
    <property type="evidence" value="ECO:0000318"/>
    <property type="project" value="GO_Central"/>
</dbReference>
<dbReference type="GO" id="GO:0007602">
    <property type="term" value="P:phototransduction"/>
    <property type="evidence" value="ECO:0000318"/>
    <property type="project" value="GO_Central"/>
</dbReference>
<dbReference type="GO" id="GO:0007601">
    <property type="term" value="P:visual perception"/>
    <property type="evidence" value="ECO:0007669"/>
    <property type="project" value="UniProtKB-KW"/>
</dbReference>
<dbReference type="CDD" id="cd15076">
    <property type="entry name" value="7tmA_SWS1_opsin"/>
    <property type="match status" value="1"/>
</dbReference>
<dbReference type="FunFam" id="1.20.1070.10:FF:000018">
    <property type="entry name" value="Rhodopsin"/>
    <property type="match status" value="1"/>
</dbReference>
<dbReference type="Gene3D" id="1.20.1070.10">
    <property type="entry name" value="Rhodopsin 7-helix transmembrane proteins"/>
    <property type="match status" value="1"/>
</dbReference>
<dbReference type="InterPro" id="IPR050125">
    <property type="entry name" value="GPCR_opsins"/>
</dbReference>
<dbReference type="InterPro" id="IPR000276">
    <property type="entry name" value="GPCR_Rhodpsn"/>
</dbReference>
<dbReference type="InterPro" id="IPR017452">
    <property type="entry name" value="GPCR_Rhodpsn_7TM"/>
</dbReference>
<dbReference type="InterPro" id="IPR001760">
    <property type="entry name" value="Opsin"/>
</dbReference>
<dbReference type="InterPro" id="IPR001521">
    <property type="entry name" value="Opsin_blue"/>
</dbReference>
<dbReference type="InterPro" id="IPR027430">
    <property type="entry name" value="Retinal_BS"/>
</dbReference>
<dbReference type="PANTHER" id="PTHR24240">
    <property type="entry name" value="OPSIN"/>
    <property type="match status" value="1"/>
</dbReference>
<dbReference type="Pfam" id="PF00001">
    <property type="entry name" value="7tm_1"/>
    <property type="match status" value="1"/>
</dbReference>
<dbReference type="PRINTS" id="PR00237">
    <property type="entry name" value="GPCRRHODOPSN"/>
</dbReference>
<dbReference type="PRINTS" id="PR00238">
    <property type="entry name" value="OPSIN"/>
</dbReference>
<dbReference type="PRINTS" id="PR00574">
    <property type="entry name" value="OPSINBLUE"/>
</dbReference>
<dbReference type="SUPFAM" id="SSF81321">
    <property type="entry name" value="Family A G protein-coupled receptor-like"/>
    <property type="match status" value="1"/>
</dbReference>
<dbReference type="PROSITE" id="PS00237">
    <property type="entry name" value="G_PROTEIN_RECEP_F1_1"/>
    <property type="match status" value="1"/>
</dbReference>
<dbReference type="PROSITE" id="PS50262">
    <property type="entry name" value="G_PROTEIN_RECEP_F1_2"/>
    <property type="match status" value="1"/>
</dbReference>
<dbReference type="PROSITE" id="PS00238">
    <property type="entry name" value="OPSIN"/>
    <property type="match status" value="1"/>
</dbReference>
<feature type="chain" id="PRO_0000197767" description="Short-wave-sensitive opsin 1">
    <location>
        <begin position="1"/>
        <end position="346"/>
    </location>
</feature>
<feature type="topological domain" description="Extracellular">
    <location>
        <begin position="1"/>
        <end position="31"/>
    </location>
</feature>
<feature type="transmembrane region" description="Helical; Name=1" evidence="3">
    <location>
        <begin position="32"/>
        <end position="56"/>
    </location>
</feature>
<feature type="topological domain" description="Cytoplasmic">
    <location>
        <begin position="57"/>
        <end position="68"/>
    </location>
</feature>
<feature type="transmembrane region" description="Helical; Name=2" evidence="3">
    <location>
        <begin position="69"/>
        <end position="94"/>
    </location>
</feature>
<feature type="topological domain" description="Extracellular">
    <location>
        <begin position="95"/>
        <end position="108"/>
    </location>
</feature>
<feature type="transmembrane region" description="Helical; Name=3" evidence="3">
    <location>
        <begin position="109"/>
        <end position="128"/>
    </location>
</feature>
<feature type="topological domain" description="Cytoplasmic">
    <location>
        <begin position="129"/>
        <end position="147"/>
    </location>
</feature>
<feature type="transmembrane region" description="Helical; Name=4" evidence="3">
    <location>
        <begin position="148"/>
        <end position="171"/>
    </location>
</feature>
<feature type="topological domain" description="Extracellular">
    <location>
        <begin position="172"/>
        <end position="197"/>
    </location>
</feature>
<feature type="transmembrane region" description="Helical; Name=5" evidence="3">
    <location>
        <begin position="198"/>
        <end position="225"/>
    </location>
</feature>
<feature type="topological domain" description="Cytoplasmic">
    <location>
        <begin position="226"/>
        <end position="247"/>
    </location>
</feature>
<feature type="transmembrane region" description="Helical; Name=6" evidence="3">
    <location>
        <begin position="248"/>
        <end position="271"/>
    </location>
</feature>
<feature type="topological domain" description="Extracellular">
    <location>
        <begin position="272"/>
        <end position="279"/>
    </location>
</feature>
<feature type="transmembrane region" description="Helical; Name=7" evidence="3">
    <location>
        <begin position="280"/>
        <end position="304"/>
    </location>
</feature>
<feature type="topological domain" description="Cytoplasmic">
    <location>
        <begin position="305"/>
        <end position="346"/>
    </location>
</feature>
<feature type="region of interest" description="Disordered" evidence="5">
    <location>
        <begin position="322"/>
        <end position="346"/>
    </location>
</feature>
<feature type="compositionally biased region" description="Low complexity" evidence="5">
    <location>
        <begin position="330"/>
        <end position="346"/>
    </location>
</feature>
<feature type="modified residue" description="N6-(retinylidene)lysine">
    <location>
        <position position="291"/>
    </location>
</feature>
<feature type="glycosylation site" description="N-linked (GlcNAc...) asparagine" evidence="6">
    <location>
        <position position="12"/>
    </location>
</feature>
<feature type="disulfide bond" evidence="4">
    <location>
        <begin position="105"/>
        <end position="182"/>
    </location>
</feature>
<feature type="sequence conflict" description="In Ref. 2; AAC05294." evidence="6" ref="2">
    <original>I</original>
    <variation>V</variation>
    <location>
        <position position="70"/>
    </location>
</feature>
<feature type="sequence conflict" description="In Ref. 2; AAC05294." evidence="6" ref="2">
    <original>F</original>
    <variation>L</variation>
    <location>
        <position position="173"/>
    </location>
</feature>
<feature type="sequence conflict" description="In Ref. 2; AAC05294." evidence="6" ref="2">
    <original>Y</original>
    <variation>D</variation>
    <location>
        <position position="279"/>
    </location>
</feature>
<feature type="sequence conflict" description="In Ref. 2; AAC05294." evidence="6" ref="2">
    <original>G</original>
    <variation>S</variation>
    <location>
        <position position="329"/>
    </location>
</feature>